<comment type="function">
    <text evidence="1">Peptide chain release factor 1 directs the termination of translation in response to the peptide chain termination codons UAG and UAA.</text>
</comment>
<comment type="subcellular location">
    <subcellularLocation>
        <location evidence="1">Cytoplasm</location>
    </subcellularLocation>
</comment>
<comment type="PTM">
    <text evidence="1">Methylated by PrmC. Methylation increases the termination efficiency of RF1.</text>
</comment>
<comment type="similarity">
    <text evidence="1">Belongs to the prokaryotic/mitochondrial release factor family.</text>
</comment>
<proteinExistence type="inferred from homology"/>
<reference key="1">
    <citation type="journal article" date="2010" name="J. Bacteriol.">
        <title>Complete genome sequence of Beijerinckia indica subsp. indica.</title>
        <authorList>
            <person name="Tamas I."/>
            <person name="Dedysh S.N."/>
            <person name="Liesack W."/>
            <person name="Stott M.B."/>
            <person name="Alam M."/>
            <person name="Murrell J.C."/>
            <person name="Dunfield P.F."/>
        </authorList>
    </citation>
    <scope>NUCLEOTIDE SEQUENCE [LARGE SCALE GENOMIC DNA]</scope>
    <source>
        <strain>ATCC 9039 / DSM 1715 / NCIMB 8712</strain>
    </source>
</reference>
<accession>B2IHL7</accession>
<gene>
    <name evidence="1" type="primary">prfA</name>
    <name type="ordered locus">Bind_0889</name>
</gene>
<keyword id="KW-0963">Cytoplasm</keyword>
<keyword id="KW-0488">Methylation</keyword>
<keyword id="KW-0648">Protein biosynthesis</keyword>
<keyword id="KW-1185">Reference proteome</keyword>
<evidence type="ECO:0000255" key="1">
    <source>
        <dbReference type="HAMAP-Rule" id="MF_00093"/>
    </source>
</evidence>
<dbReference type="EMBL" id="CP001016">
    <property type="protein sequence ID" value="ACB94538.1"/>
    <property type="molecule type" value="Genomic_DNA"/>
</dbReference>
<dbReference type="RefSeq" id="WP_012383895.1">
    <property type="nucleotide sequence ID" value="NC_010581.1"/>
</dbReference>
<dbReference type="SMR" id="B2IHL7"/>
<dbReference type="STRING" id="395963.Bind_0889"/>
<dbReference type="KEGG" id="bid:Bind_0889"/>
<dbReference type="eggNOG" id="COG0216">
    <property type="taxonomic scope" value="Bacteria"/>
</dbReference>
<dbReference type="HOGENOM" id="CLU_036856_0_1_5"/>
<dbReference type="OrthoDB" id="9806673at2"/>
<dbReference type="Proteomes" id="UP000001695">
    <property type="component" value="Chromosome"/>
</dbReference>
<dbReference type="GO" id="GO:0005737">
    <property type="term" value="C:cytoplasm"/>
    <property type="evidence" value="ECO:0007669"/>
    <property type="project" value="UniProtKB-SubCell"/>
</dbReference>
<dbReference type="GO" id="GO:0016149">
    <property type="term" value="F:translation release factor activity, codon specific"/>
    <property type="evidence" value="ECO:0007669"/>
    <property type="project" value="UniProtKB-UniRule"/>
</dbReference>
<dbReference type="FunFam" id="3.30.160.20:FF:000004">
    <property type="entry name" value="Peptide chain release factor 1"/>
    <property type="match status" value="1"/>
</dbReference>
<dbReference type="FunFam" id="3.30.70.1660:FF:000002">
    <property type="entry name" value="Peptide chain release factor 1"/>
    <property type="match status" value="1"/>
</dbReference>
<dbReference type="FunFam" id="3.30.70.1660:FF:000004">
    <property type="entry name" value="Peptide chain release factor 1"/>
    <property type="match status" value="1"/>
</dbReference>
<dbReference type="Gene3D" id="3.30.160.20">
    <property type="match status" value="1"/>
</dbReference>
<dbReference type="Gene3D" id="3.30.70.1660">
    <property type="match status" value="2"/>
</dbReference>
<dbReference type="Gene3D" id="6.10.140.1950">
    <property type="match status" value="1"/>
</dbReference>
<dbReference type="HAMAP" id="MF_00093">
    <property type="entry name" value="Rel_fac_1"/>
    <property type="match status" value="1"/>
</dbReference>
<dbReference type="InterPro" id="IPR005139">
    <property type="entry name" value="PCRF"/>
</dbReference>
<dbReference type="InterPro" id="IPR000352">
    <property type="entry name" value="Pep_chain_release_fac_I"/>
</dbReference>
<dbReference type="InterPro" id="IPR045853">
    <property type="entry name" value="Pep_chain_release_fac_I_sf"/>
</dbReference>
<dbReference type="InterPro" id="IPR050057">
    <property type="entry name" value="Prokaryotic/Mito_RF"/>
</dbReference>
<dbReference type="InterPro" id="IPR004373">
    <property type="entry name" value="RF-1"/>
</dbReference>
<dbReference type="NCBIfam" id="TIGR00019">
    <property type="entry name" value="prfA"/>
    <property type="match status" value="1"/>
</dbReference>
<dbReference type="NCBIfam" id="NF001859">
    <property type="entry name" value="PRK00591.1"/>
    <property type="match status" value="1"/>
</dbReference>
<dbReference type="PANTHER" id="PTHR43804">
    <property type="entry name" value="LD18447P"/>
    <property type="match status" value="1"/>
</dbReference>
<dbReference type="PANTHER" id="PTHR43804:SF7">
    <property type="entry name" value="LD18447P"/>
    <property type="match status" value="1"/>
</dbReference>
<dbReference type="Pfam" id="PF03462">
    <property type="entry name" value="PCRF"/>
    <property type="match status" value="1"/>
</dbReference>
<dbReference type="Pfam" id="PF00472">
    <property type="entry name" value="RF-1"/>
    <property type="match status" value="1"/>
</dbReference>
<dbReference type="SMART" id="SM00937">
    <property type="entry name" value="PCRF"/>
    <property type="match status" value="1"/>
</dbReference>
<dbReference type="SUPFAM" id="SSF75620">
    <property type="entry name" value="Release factor"/>
    <property type="match status" value="1"/>
</dbReference>
<dbReference type="PROSITE" id="PS00745">
    <property type="entry name" value="RF_PROK_I"/>
    <property type="match status" value="1"/>
</dbReference>
<protein>
    <recommendedName>
        <fullName evidence="1">Peptide chain release factor 1</fullName>
        <shortName evidence="1">RF-1</shortName>
    </recommendedName>
</protein>
<sequence length="358" mass="39537">MLPQDKLDLILRRHEEISARLTENPDAATFVSLSRELAGLDEVAQAIRAYRDEMTEISGMEAMLADPATEPELLALAEEELQDARQRLGAFEQHLRIALLPKDADDEKSAILEIRAGTGGDEAALFAGDLFRMYQRYAEAKGWGVEILSVSEGTAGGYKEIVAEITGKGVFAKLKFESGTHRVQRVPDTETQGRIHTSAATVAVLPQAEEVDVEINEADLKIDTMRAQGAGGQHVNKTESAIRITHLPTGTVIFVQDERSQHKNRARAMSLLRSRIYDAKRQQLEAERAADRKAQVGSGDRSERIRTYNFPQGRLTDHRINLTLYKLDKVMTGEALDEVIDALITDYQAAQLAASEGA</sequence>
<name>RF1_BEII9</name>
<feature type="chain" id="PRO_1000093423" description="Peptide chain release factor 1">
    <location>
        <begin position="1"/>
        <end position="358"/>
    </location>
</feature>
<feature type="modified residue" description="N5-methylglutamine" evidence="1">
    <location>
        <position position="233"/>
    </location>
</feature>
<organism>
    <name type="scientific">Beijerinckia indica subsp. indica (strain ATCC 9039 / DSM 1715 / NCIMB 8712)</name>
    <dbReference type="NCBI Taxonomy" id="395963"/>
    <lineage>
        <taxon>Bacteria</taxon>
        <taxon>Pseudomonadati</taxon>
        <taxon>Pseudomonadota</taxon>
        <taxon>Alphaproteobacteria</taxon>
        <taxon>Hyphomicrobiales</taxon>
        <taxon>Beijerinckiaceae</taxon>
        <taxon>Beijerinckia</taxon>
    </lineage>
</organism>